<organism>
    <name type="scientific">Shigella boydii serotype 4 (strain Sb227)</name>
    <dbReference type="NCBI Taxonomy" id="300268"/>
    <lineage>
        <taxon>Bacteria</taxon>
        <taxon>Pseudomonadati</taxon>
        <taxon>Pseudomonadota</taxon>
        <taxon>Gammaproteobacteria</taxon>
        <taxon>Enterobacterales</taxon>
        <taxon>Enterobacteriaceae</taxon>
        <taxon>Shigella</taxon>
    </lineage>
</organism>
<dbReference type="EC" id="2.7.8.-" evidence="1"/>
<dbReference type="EMBL" id="CP000036">
    <property type="protein sequence ID" value="ABB66417.1"/>
    <property type="molecule type" value="Genomic_DNA"/>
</dbReference>
<dbReference type="RefSeq" id="WP_000214508.1">
    <property type="nucleotide sequence ID" value="NC_007613.1"/>
</dbReference>
<dbReference type="SMR" id="Q31ZU1"/>
<dbReference type="KEGG" id="sbo:SBO_1818"/>
<dbReference type="HOGENOM" id="CLU_038053_1_0_6"/>
<dbReference type="Proteomes" id="UP000007067">
    <property type="component" value="Chromosome"/>
</dbReference>
<dbReference type="GO" id="GO:0005886">
    <property type="term" value="C:plasma membrane"/>
    <property type="evidence" value="ECO:0007669"/>
    <property type="project" value="UniProtKB-SubCell"/>
</dbReference>
<dbReference type="GO" id="GO:0008808">
    <property type="term" value="F:cardiolipin synthase activity"/>
    <property type="evidence" value="ECO:0007669"/>
    <property type="project" value="InterPro"/>
</dbReference>
<dbReference type="GO" id="GO:0032049">
    <property type="term" value="P:cardiolipin biosynthetic process"/>
    <property type="evidence" value="ECO:0007669"/>
    <property type="project" value="InterPro"/>
</dbReference>
<dbReference type="CDD" id="cd09152">
    <property type="entry name" value="PLDc_EcCLS_like_1"/>
    <property type="match status" value="1"/>
</dbReference>
<dbReference type="CDD" id="cd09158">
    <property type="entry name" value="PLDc_EcCLS_like_2"/>
    <property type="match status" value="1"/>
</dbReference>
<dbReference type="FunFam" id="3.30.870.10:FF:000002">
    <property type="entry name" value="Cardiolipin synthase A"/>
    <property type="match status" value="1"/>
</dbReference>
<dbReference type="FunFam" id="3.30.870.10:FF:000003">
    <property type="entry name" value="Cardiolipin synthase A"/>
    <property type="match status" value="1"/>
</dbReference>
<dbReference type="Gene3D" id="3.30.870.10">
    <property type="entry name" value="Endonuclease Chain A"/>
    <property type="match status" value="2"/>
</dbReference>
<dbReference type="HAMAP" id="MF_00190">
    <property type="entry name" value="Cardiolipin_synth_ClsA"/>
    <property type="match status" value="1"/>
</dbReference>
<dbReference type="InterPro" id="IPR022924">
    <property type="entry name" value="Cardiolipin_synthase"/>
</dbReference>
<dbReference type="InterPro" id="IPR030840">
    <property type="entry name" value="CL_synthase_A"/>
</dbReference>
<dbReference type="InterPro" id="IPR027379">
    <property type="entry name" value="CLS_N"/>
</dbReference>
<dbReference type="InterPro" id="IPR025202">
    <property type="entry name" value="PLD-like_dom"/>
</dbReference>
<dbReference type="InterPro" id="IPR001736">
    <property type="entry name" value="PLipase_D/transphosphatidylase"/>
</dbReference>
<dbReference type="NCBIfam" id="TIGR04265">
    <property type="entry name" value="bac_cardiolipin"/>
    <property type="match status" value="1"/>
</dbReference>
<dbReference type="PANTHER" id="PTHR21248">
    <property type="entry name" value="CARDIOLIPIN SYNTHASE"/>
    <property type="match status" value="1"/>
</dbReference>
<dbReference type="PANTHER" id="PTHR21248:SF22">
    <property type="entry name" value="PHOSPHOLIPASE D"/>
    <property type="match status" value="1"/>
</dbReference>
<dbReference type="Pfam" id="PF13091">
    <property type="entry name" value="PLDc_2"/>
    <property type="match status" value="2"/>
</dbReference>
<dbReference type="Pfam" id="PF13396">
    <property type="entry name" value="PLDc_N"/>
    <property type="match status" value="1"/>
</dbReference>
<dbReference type="SMART" id="SM00155">
    <property type="entry name" value="PLDc"/>
    <property type="match status" value="2"/>
</dbReference>
<dbReference type="SUPFAM" id="SSF56024">
    <property type="entry name" value="Phospholipase D/nuclease"/>
    <property type="match status" value="2"/>
</dbReference>
<dbReference type="PROSITE" id="PS50035">
    <property type="entry name" value="PLD"/>
    <property type="match status" value="2"/>
</dbReference>
<keyword id="KW-0997">Cell inner membrane</keyword>
<keyword id="KW-1003">Cell membrane</keyword>
<keyword id="KW-0444">Lipid biosynthesis</keyword>
<keyword id="KW-0443">Lipid metabolism</keyword>
<keyword id="KW-0472">Membrane</keyword>
<keyword id="KW-0594">Phospholipid biosynthesis</keyword>
<keyword id="KW-1208">Phospholipid metabolism</keyword>
<keyword id="KW-0677">Repeat</keyword>
<keyword id="KW-0808">Transferase</keyword>
<keyword id="KW-0812">Transmembrane</keyword>
<keyword id="KW-1133">Transmembrane helix</keyword>
<reference key="1">
    <citation type="journal article" date="2005" name="Nucleic Acids Res.">
        <title>Genome dynamics and diversity of Shigella species, the etiologic agents of bacillary dysentery.</title>
        <authorList>
            <person name="Yang F."/>
            <person name="Yang J."/>
            <person name="Zhang X."/>
            <person name="Chen L."/>
            <person name="Jiang Y."/>
            <person name="Yan Y."/>
            <person name="Tang X."/>
            <person name="Wang J."/>
            <person name="Xiong Z."/>
            <person name="Dong J."/>
            <person name="Xue Y."/>
            <person name="Zhu Y."/>
            <person name="Xu X."/>
            <person name="Sun L."/>
            <person name="Chen S."/>
            <person name="Nie H."/>
            <person name="Peng J."/>
            <person name="Xu J."/>
            <person name="Wang Y."/>
            <person name="Yuan Z."/>
            <person name="Wen Y."/>
            <person name="Yao Z."/>
            <person name="Shen Y."/>
            <person name="Qiang B."/>
            <person name="Hou Y."/>
            <person name="Yu J."/>
            <person name="Jin Q."/>
        </authorList>
    </citation>
    <scope>NUCLEOTIDE SEQUENCE [LARGE SCALE GENOMIC DNA]</scope>
    <source>
        <strain>Sb227</strain>
    </source>
</reference>
<name>CLSA_SHIBS</name>
<comment type="function">
    <text evidence="1">Catalyzes the reversible phosphatidyl group transfer from one phosphatidylglycerol molecule to another to form cardiolipin (CL) (diphosphatidylglycerol) and glycerol.</text>
</comment>
<comment type="catalytic activity">
    <reaction evidence="1">
        <text>2 a 1,2-diacyl-sn-glycero-3-phospho-(1'-sn-glycerol) = a cardiolipin + glycerol</text>
        <dbReference type="Rhea" id="RHEA:31451"/>
        <dbReference type="ChEBI" id="CHEBI:17754"/>
        <dbReference type="ChEBI" id="CHEBI:62237"/>
        <dbReference type="ChEBI" id="CHEBI:64716"/>
    </reaction>
</comment>
<comment type="subcellular location">
    <subcellularLocation>
        <location evidence="1">Cell inner membrane</location>
        <topology evidence="1">Multi-pass membrane protein</topology>
    </subcellularLocation>
</comment>
<comment type="similarity">
    <text evidence="1">Belongs to the phospholipase D family. Cardiolipin synthase subfamily. ClsA sub-subfamily.</text>
</comment>
<protein>
    <recommendedName>
        <fullName evidence="1">Cardiolipin synthase A</fullName>
        <shortName evidence="1">CL synthase</shortName>
        <ecNumber evidence="1">2.7.8.-</ecNumber>
    </recommendedName>
</protein>
<sequence length="486" mass="54804">MTTVYTLVSWLAILGYWLLIAGVTLRILMKRRAVPSAMAWLLIIYILPLVGIIAYLAVGELHLGKRRAERARAMWPSTAKWLNDLKACKHIFAEENSSVAAPLFKLCERRQGIAGVKGNQLQLMTESDDVMQALIRDIQLARHNIEIVFYIWQPGGMADQVAESLMAAARRGIHCRLMLDSAGSVAFFRSPWPELMRNAGIEVVEALKVNLMRVFLRRMDLRQHRKMIMIDNYIAYTGSMNMVDPRYFKQDAGVGQWIDLMARMEGPIATAMGIIYSCDWEIETGKRILPPPPDVNIMPFEQASGHTIHTIASGPGFPEDLIHQALLTAAYSAREYLIMTTPYFVPSDDLLHAICTAAQRGVDVSIILPRKNDSMLVGWASRAFFTELLAAGVKIYQFEGGLLHTKSVLVDGELSLVGTVNLDMRSLWLNFEITLAIDDKGFGADLAAVQDDYISRSRLLDARLWLKRPLWQRVAERLFYFFSPLL</sequence>
<accession>Q31ZU1</accession>
<gene>
    <name evidence="1" type="primary">clsA</name>
    <name type="synonym">cls</name>
    <name type="ordered locus">SBO_1818</name>
</gene>
<evidence type="ECO:0000255" key="1">
    <source>
        <dbReference type="HAMAP-Rule" id="MF_00190"/>
    </source>
</evidence>
<proteinExistence type="inferred from homology"/>
<feature type="chain" id="PRO_1000058493" description="Cardiolipin synthase A">
    <location>
        <begin position="1"/>
        <end position="486"/>
    </location>
</feature>
<feature type="transmembrane region" description="Helical" evidence="1">
    <location>
        <begin position="3"/>
        <end position="23"/>
    </location>
</feature>
<feature type="transmembrane region" description="Helical" evidence="1">
    <location>
        <begin position="38"/>
        <end position="58"/>
    </location>
</feature>
<feature type="domain" description="PLD phosphodiesterase 1" evidence="1">
    <location>
        <begin position="219"/>
        <end position="246"/>
    </location>
</feature>
<feature type="domain" description="PLD phosphodiesterase 2" evidence="1">
    <location>
        <begin position="399"/>
        <end position="426"/>
    </location>
</feature>
<feature type="active site" evidence="1">
    <location>
        <position position="224"/>
    </location>
</feature>
<feature type="active site" evidence="1">
    <location>
        <position position="226"/>
    </location>
</feature>
<feature type="active site" evidence="1">
    <location>
        <position position="231"/>
    </location>
</feature>
<feature type="active site" evidence="1">
    <location>
        <position position="404"/>
    </location>
</feature>
<feature type="active site" evidence="1">
    <location>
        <position position="406"/>
    </location>
</feature>
<feature type="active site" evidence="1">
    <location>
        <position position="411"/>
    </location>
</feature>